<reference key="1">
    <citation type="journal article" date="2002" name="Gene">
        <title>Cloning the AFURS1 gene which is up-regulated in senescent human parenchymal kidney cells.</title>
        <authorList>
            <person name="Habtemichael N."/>
            <person name="Kovacs G."/>
        </authorList>
    </citation>
    <scope>NUCLEOTIDE SEQUENCE [MRNA] (ISOFORM 2)</scope>
</reference>
<reference key="2">
    <citation type="journal article" date="2006" name="Nature">
        <title>The DNA sequence, annotation and analysis of human chromosome 3.</title>
        <authorList>
            <person name="Muzny D.M."/>
            <person name="Scherer S.E."/>
            <person name="Kaul R."/>
            <person name="Wang J."/>
            <person name="Yu J."/>
            <person name="Sudbrak R."/>
            <person name="Buhay C.J."/>
            <person name="Chen R."/>
            <person name="Cree A."/>
            <person name="Ding Y."/>
            <person name="Dugan-Rocha S."/>
            <person name="Gill R."/>
            <person name="Gunaratne P."/>
            <person name="Harris R.A."/>
            <person name="Hawes A.C."/>
            <person name="Hernandez J."/>
            <person name="Hodgson A.V."/>
            <person name="Hume J."/>
            <person name="Jackson A."/>
            <person name="Khan Z.M."/>
            <person name="Kovar-Smith C."/>
            <person name="Lewis L.R."/>
            <person name="Lozado R.J."/>
            <person name="Metzker M.L."/>
            <person name="Milosavljevic A."/>
            <person name="Miner G.R."/>
            <person name="Morgan M.B."/>
            <person name="Nazareth L.V."/>
            <person name="Scott G."/>
            <person name="Sodergren E."/>
            <person name="Song X.-Z."/>
            <person name="Steffen D."/>
            <person name="Wei S."/>
            <person name="Wheeler D.A."/>
            <person name="Wright M.W."/>
            <person name="Worley K.C."/>
            <person name="Yuan Y."/>
            <person name="Zhang Z."/>
            <person name="Adams C.Q."/>
            <person name="Ansari-Lari M.A."/>
            <person name="Ayele M."/>
            <person name="Brown M.J."/>
            <person name="Chen G."/>
            <person name="Chen Z."/>
            <person name="Clendenning J."/>
            <person name="Clerc-Blankenburg K.P."/>
            <person name="Chen R."/>
            <person name="Chen Z."/>
            <person name="Davis C."/>
            <person name="Delgado O."/>
            <person name="Dinh H.H."/>
            <person name="Dong W."/>
            <person name="Draper H."/>
            <person name="Ernst S."/>
            <person name="Fu G."/>
            <person name="Gonzalez-Garay M.L."/>
            <person name="Garcia D.K."/>
            <person name="Gillett W."/>
            <person name="Gu J."/>
            <person name="Hao B."/>
            <person name="Haugen E."/>
            <person name="Havlak P."/>
            <person name="He X."/>
            <person name="Hennig S."/>
            <person name="Hu S."/>
            <person name="Huang W."/>
            <person name="Jackson L.R."/>
            <person name="Jacob L.S."/>
            <person name="Kelly S.H."/>
            <person name="Kube M."/>
            <person name="Levy R."/>
            <person name="Li Z."/>
            <person name="Liu B."/>
            <person name="Liu J."/>
            <person name="Liu W."/>
            <person name="Lu J."/>
            <person name="Maheshwari M."/>
            <person name="Nguyen B.-V."/>
            <person name="Okwuonu G.O."/>
            <person name="Palmeiri A."/>
            <person name="Pasternak S."/>
            <person name="Perez L.M."/>
            <person name="Phelps K.A."/>
            <person name="Plopper F.J."/>
            <person name="Qiang B."/>
            <person name="Raymond C."/>
            <person name="Rodriguez R."/>
            <person name="Saenphimmachak C."/>
            <person name="Santibanez J."/>
            <person name="Shen H."/>
            <person name="Shen Y."/>
            <person name="Subramanian S."/>
            <person name="Tabor P.E."/>
            <person name="Verduzco D."/>
            <person name="Waldron L."/>
            <person name="Wang J."/>
            <person name="Wang J."/>
            <person name="Wang Q."/>
            <person name="Williams G.A."/>
            <person name="Wong G.K.-S."/>
            <person name="Yao Z."/>
            <person name="Zhang J."/>
            <person name="Zhang X."/>
            <person name="Zhao G."/>
            <person name="Zhou J."/>
            <person name="Zhou Y."/>
            <person name="Nelson D."/>
            <person name="Lehrach H."/>
            <person name="Reinhardt R."/>
            <person name="Naylor S.L."/>
            <person name="Yang H."/>
            <person name="Olson M."/>
            <person name="Weinstock G."/>
            <person name="Gibbs R.A."/>
        </authorList>
    </citation>
    <scope>NUCLEOTIDE SEQUENCE [LARGE SCALE GENOMIC DNA]</scope>
</reference>
<reference key="3">
    <citation type="journal article" date="2004" name="Nat. Genet.">
        <title>Complete sequencing and characterization of 21,243 full-length human cDNAs.</title>
        <authorList>
            <person name="Ota T."/>
            <person name="Suzuki Y."/>
            <person name="Nishikawa T."/>
            <person name="Otsuki T."/>
            <person name="Sugiyama T."/>
            <person name="Irie R."/>
            <person name="Wakamatsu A."/>
            <person name="Hayashi K."/>
            <person name="Sato H."/>
            <person name="Nagai K."/>
            <person name="Kimura K."/>
            <person name="Makita H."/>
            <person name="Sekine M."/>
            <person name="Obayashi M."/>
            <person name="Nishi T."/>
            <person name="Shibahara T."/>
            <person name="Tanaka T."/>
            <person name="Ishii S."/>
            <person name="Yamamoto J."/>
            <person name="Saito K."/>
            <person name="Kawai Y."/>
            <person name="Isono Y."/>
            <person name="Nakamura Y."/>
            <person name="Nagahari K."/>
            <person name="Murakami K."/>
            <person name="Yasuda T."/>
            <person name="Iwayanagi T."/>
            <person name="Wagatsuma M."/>
            <person name="Shiratori A."/>
            <person name="Sudo H."/>
            <person name="Hosoiri T."/>
            <person name="Kaku Y."/>
            <person name="Kodaira H."/>
            <person name="Kondo H."/>
            <person name="Sugawara M."/>
            <person name="Takahashi M."/>
            <person name="Kanda K."/>
            <person name="Yokoi T."/>
            <person name="Furuya T."/>
            <person name="Kikkawa E."/>
            <person name="Omura Y."/>
            <person name="Abe K."/>
            <person name="Kamihara K."/>
            <person name="Katsuta N."/>
            <person name="Sato K."/>
            <person name="Tanikawa M."/>
            <person name="Yamazaki M."/>
            <person name="Ninomiya K."/>
            <person name="Ishibashi T."/>
            <person name="Yamashita H."/>
            <person name="Murakawa K."/>
            <person name="Fujimori K."/>
            <person name="Tanai H."/>
            <person name="Kimata M."/>
            <person name="Watanabe M."/>
            <person name="Hiraoka S."/>
            <person name="Chiba Y."/>
            <person name="Ishida S."/>
            <person name="Ono Y."/>
            <person name="Takiguchi S."/>
            <person name="Watanabe S."/>
            <person name="Yosida M."/>
            <person name="Hotuta T."/>
            <person name="Kusano J."/>
            <person name="Kanehori K."/>
            <person name="Takahashi-Fujii A."/>
            <person name="Hara H."/>
            <person name="Tanase T.-O."/>
            <person name="Nomura Y."/>
            <person name="Togiya S."/>
            <person name="Komai F."/>
            <person name="Hara R."/>
            <person name="Takeuchi K."/>
            <person name="Arita M."/>
            <person name="Imose N."/>
            <person name="Musashino K."/>
            <person name="Yuuki H."/>
            <person name="Oshima A."/>
            <person name="Sasaki N."/>
            <person name="Aotsuka S."/>
            <person name="Yoshikawa Y."/>
            <person name="Matsunawa H."/>
            <person name="Ichihara T."/>
            <person name="Shiohata N."/>
            <person name="Sano S."/>
            <person name="Moriya S."/>
            <person name="Momiyama H."/>
            <person name="Satoh N."/>
            <person name="Takami S."/>
            <person name="Terashima Y."/>
            <person name="Suzuki O."/>
            <person name="Nakagawa S."/>
            <person name="Senoh A."/>
            <person name="Mizoguchi H."/>
            <person name="Goto Y."/>
            <person name="Shimizu F."/>
            <person name="Wakebe H."/>
            <person name="Hishigaki H."/>
            <person name="Watanabe T."/>
            <person name="Sugiyama A."/>
            <person name="Takemoto M."/>
            <person name="Kawakami B."/>
            <person name="Yamazaki M."/>
            <person name="Watanabe K."/>
            <person name="Kumagai A."/>
            <person name="Itakura S."/>
            <person name="Fukuzumi Y."/>
            <person name="Fujimori Y."/>
            <person name="Komiyama M."/>
            <person name="Tashiro H."/>
            <person name="Tanigami A."/>
            <person name="Fujiwara T."/>
            <person name="Ono T."/>
            <person name="Yamada K."/>
            <person name="Fujii Y."/>
            <person name="Ozaki K."/>
            <person name="Hirao M."/>
            <person name="Ohmori Y."/>
            <person name="Kawabata A."/>
            <person name="Hikiji T."/>
            <person name="Kobatake N."/>
            <person name="Inagaki H."/>
            <person name="Ikema Y."/>
            <person name="Okamoto S."/>
            <person name="Okitani R."/>
            <person name="Kawakami T."/>
            <person name="Noguchi S."/>
            <person name="Itoh T."/>
            <person name="Shigeta K."/>
            <person name="Senba T."/>
            <person name="Matsumura K."/>
            <person name="Nakajima Y."/>
            <person name="Mizuno T."/>
            <person name="Morinaga M."/>
            <person name="Sasaki M."/>
            <person name="Togashi T."/>
            <person name="Oyama M."/>
            <person name="Hata H."/>
            <person name="Watanabe M."/>
            <person name="Komatsu T."/>
            <person name="Mizushima-Sugano J."/>
            <person name="Satoh T."/>
            <person name="Shirai Y."/>
            <person name="Takahashi Y."/>
            <person name="Nakagawa K."/>
            <person name="Okumura K."/>
            <person name="Nagase T."/>
            <person name="Nomura N."/>
            <person name="Kikuchi H."/>
            <person name="Masuho Y."/>
            <person name="Yamashita R."/>
            <person name="Nakai K."/>
            <person name="Yada T."/>
            <person name="Nakamura Y."/>
            <person name="Ohara O."/>
            <person name="Isogai T."/>
            <person name="Sugano S."/>
        </authorList>
    </citation>
    <scope>NUCLEOTIDE SEQUENCE [LARGE SCALE MRNA] OF 402-1226 (ISOFORM 1)</scope>
    <source>
        <tissue>Coronary artery</tissue>
        <tissue>Placenta</tissue>
    </source>
</reference>
<reference key="4">
    <citation type="journal article" date="2006" name="Cell">
        <title>Global, in vivo, and site-specific phosphorylation dynamics in signaling networks.</title>
        <authorList>
            <person name="Olsen J.V."/>
            <person name="Blagoev B."/>
            <person name="Gnad F."/>
            <person name="Macek B."/>
            <person name="Kumar C."/>
            <person name="Mortensen P."/>
            <person name="Mann M."/>
        </authorList>
    </citation>
    <scope>PHOSPHORYLATION [LARGE SCALE ANALYSIS] AT SER-817</scope>
    <scope>IDENTIFICATION BY MASS SPECTROMETRY [LARGE SCALE ANALYSIS]</scope>
    <source>
        <tissue>Cervix carcinoma</tissue>
    </source>
</reference>
<reference key="5">
    <citation type="journal article" date="2008" name="Mol. Cell">
        <title>Kinase-selective enrichment enables quantitative phosphoproteomics of the kinome across the cell cycle.</title>
        <authorList>
            <person name="Daub H."/>
            <person name="Olsen J.V."/>
            <person name="Bairlein M."/>
            <person name="Gnad F."/>
            <person name="Oppermann F.S."/>
            <person name="Korner R."/>
            <person name="Greff Z."/>
            <person name="Keri G."/>
            <person name="Stemmann O."/>
            <person name="Mann M."/>
        </authorList>
    </citation>
    <scope>PHOSPHORYLATION [LARGE SCALE ANALYSIS] AT SER-817</scope>
    <scope>IDENTIFICATION BY MASS SPECTROMETRY [LARGE SCALE ANALYSIS]</scope>
    <source>
        <tissue>Cervix carcinoma</tissue>
    </source>
</reference>
<reference key="6">
    <citation type="journal article" date="2008" name="Proc. Natl. Acad. Sci. U.S.A.">
        <title>A quantitative atlas of mitotic phosphorylation.</title>
        <authorList>
            <person name="Dephoure N."/>
            <person name="Zhou C."/>
            <person name="Villen J."/>
            <person name="Beausoleil S.A."/>
            <person name="Bakalarski C.E."/>
            <person name="Elledge S.J."/>
            <person name="Gygi S.P."/>
        </authorList>
    </citation>
    <scope>PHOSPHORYLATION [LARGE SCALE ANALYSIS] AT SER-98 AND SER-817</scope>
    <scope>IDENTIFICATION BY MASS SPECTROMETRY [LARGE SCALE ANALYSIS]</scope>
    <source>
        <tissue>Cervix carcinoma</tissue>
    </source>
</reference>
<reference key="7">
    <citation type="journal article" date="2009" name="Sci. Signal.">
        <title>Quantitative phosphoproteomic analysis of T cell receptor signaling reveals system-wide modulation of protein-protein interactions.</title>
        <authorList>
            <person name="Mayya V."/>
            <person name="Lundgren D.H."/>
            <person name="Hwang S.-I."/>
            <person name="Rezaul K."/>
            <person name="Wu L."/>
            <person name="Eng J.K."/>
            <person name="Rodionov V."/>
            <person name="Han D.K."/>
        </authorList>
    </citation>
    <scope>PHOSPHORYLATION [LARGE SCALE ANALYSIS] AT SER-98 AND SER-817</scope>
    <scope>IDENTIFICATION BY MASS SPECTROMETRY [LARGE SCALE ANALYSIS]</scope>
    <source>
        <tissue>Leukemic T-cell</tissue>
    </source>
</reference>
<reference key="8">
    <citation type="journal article" date="2010" name="Sci. Signal.">
        <title>Quantitative phosphoproteomics reveals widespread full phosphorylation site occupancy during mitosis.</title>
        <authorList>
            <person name="Olsen J.V."/>
            <person name="Vermeulen M."/>
            <person name="Santamaria A."/>
            <person name="Kumar C."/>
            <person name="Miller M.L."/>
            <person name="Jensen L.J."/>
            <person name="Gnad F."/>
            <person name="Cox J."/>
            <person name="Jensen T.S."/>
            <person name="Nigg E.A."/>
            <person name="Brunak S."/>
            <person name="Mann M."/>
        </authorList>
    </citation>
    <scope>PHOSPHORYLATION [LARGE SCALE ANALYSIS] AT SER-817</scope>
    <scope>IDENTIFICATION BY MASS SPECTROMETRY [LARGE SCALE ANALYSIS]</scope>
    <source>
        <tissue>Cervix carcinoma</tissue>
    </source>
</reference>
<reference key="9">
    <citation type="journal article" date="2011" name="Sci. Signal.">
        <title>System-wide temporal characterization of the proteome and phosphoproteome of human embryonic stem cell differentiation.</title>
        <authorList>
            <person name="Rigbolt K.T."/>
            <person name="Prokhorova T.A."/>
            <person name="Akimov V."/>
            <person name="Henningsen J."/>
            <person name="Johansen P.T."/>
            <person name="Kratchmarova I."/>
            <person name="Kassem M."/>
            <person name="Mann M."/>
            <person name="Olsen J.V."/>
            <person name="Blagoev B."/>
        </authorList>
    </citation>
    <scope>PHOSPHORYLATION [LARGE SCALE ANALYSIS] AT SER-817</scope>
    <scope>IDENTIFICATION BY MASS SPECTROMETRY [LARGE SCALE ANALYSIS]</scope>
</reference>
<reference key="10">
    <citation type="journal article" date="2013" name="J. Proteome Res.">
        <title>Toward a comprehensive characterization of a human cancer cell phosphoproteome.</title>
        <authorList>
            <person name="Zhou H."/>
            <person name="Di Palma S."/>
            <person name="Preisinger C."/>
            <person name="Peng M."/>
            <person name="Polat A.N."/>
            <person name="Heck A.J."/>
            <person name="Mohammed S."/>
        </authorList>
    </citation>
    <scope>PHOSPHORYLATION [LARGE SCALE ANALYSIS] AT SER-98 AND SER-817</scope>
    <scope>IDENTIFICATION BY MASS SPECTROMETRY [LARGE SCALE ANALYSIS]</scope>
    <source>
        <tissue>Cervix carcinoma</tissue>
        <tissue>Erythroleukemia</tissue>
    </source>
</reference>
<reference key="11">
    <citation type="journal article" date="2014" name="J. Proteomics">
        <title>An enzyme assisted RP-RPLC approach for in-depth analysis of human liver phosphoproteome.</title>
        <authorList>
            <person name="Bian Y."/>
            <person name="Song C."/>
            <person name="Cheng K."/>
            <person name="Dong M."/>
            <person name="Wang F."/>
            <person name="Huang J."/>
            <person name="Sun D."/>
            <person name="Wang L."/>
            <person name="Ye M."/>
            <person name="Zou H."/>
        </authorList>
    </citation>
    <scope>PHOSPHORYLATION [LARGE SCALE ANALYSIS] AT SER-817</scope>
    <scope>IDENTIFICATION BY MASS SPECTROMETRY [LARGE SCALE ANALYSIS]</scope>
    <source>
        <tissue>Liver</tissue>
    </source>
</reference>
<reference key="12">
    <citation type="journal article" date="2016" name="Am. J. Cancer Res.">
        <title>ATP13A3 and caveolin-1 as potential biomarkers for difluoromethylornithine-based therapies in pancreatic cancers.</title>
        <authorList>
            <person name="Madan M."/>
            <person name="Patel A."/>
            <person name="Skruber K."/>
            <person name="Geerts D."/>
            <person name="Altomare D.A."/>
            <person name="Iv O.P."/>
        </authorList>
    </citation>
    <scope>FUNCTION</scope>
    <scope>INDUCTION</scope>
</reference>
<reference key="13">
    <citation type="journal article" date="2018" name="PLoS ONE">
        <title>Parkinson disease related ATP13A2 evolved early in animal evolution.</title>
        <authorList>
            <person name="Soerensen D.M."/>
            <person name="Holemans T."/>
            <person name="van Veen S."/>
            <person name="Martin S."/>
            <person name="Arslan T."/>
            <person name="Haagendahl I.W."/>
            <person name="Holen H.W."/>
            <person name="Hamouda N.N."/>
            <person name="Eggermont J."/>
            <person name="Palmgren M."/>
            <person name="Vangheluwe P."/>
        </authorList>
    </citation>
    <scope>SUBCELLULAR LOCATION</scope>
    <scope>TISSUE SPECIFICITY</scope>
    <scope>TOPOLOGY</scope>
</reference>
<reference key="14">
    <citation type="journal article" date="2019" name="Sci. Rep.">
        <title>A combined targeted and whole exome sequencing approach identified novel candidate genes involved in heritable pulmonary arterial hypertension.</title>
        <authorList>
            <person name="Barozzi C."/>
            <person name="Galletti M."/>
            <person name="Tomasi L."/>
            <person name="De Fanti S."/>
            <person name="Palazzini M."/>
            <person name="Manes A."/>
            <person name="Sazzini M."/>
            <person name="Galie N."/>
        </authorList>
    </citation>
    <scope>INVOLVEMENT IN PPH5</scope>
    <scope>VARIANT PPH5 MET-855</scope>
</reference>
<reference key="15">
    <citation type="journal article" date="2021" name="J. Biol. Chem.">
        <title>ATP13A3 is a major component of the enigmatic mammalian polyamine transport system.</title>
        <authorList>
            <person name="Hamouda N.N."/>
            <person name="Van den Haute C."/>
            <person name="Vanhoutte R."/>
            <person name="Sannerud R."/>
            <person name="Azfar M."/>
            <person name="Mayer R."/>
            <person name="Cortes Calabuig A."/>
            <person name="Swinnen J.V."/>
            <person name="Agostinis P."/>
            <person name="Baekelandt V."/>
            <person name="Annaert W."/>
            <person name="Impens F."/>
            <person name="Verhelst S.H.L."/>
            <person name="Eggermont J."/>
            <person name="Martin S."/>
            <person name="Vangheluwe P."/>
        </authorList>
    </citation>
    <scope>FUNCTION</scope>
    <scope>CATALYTIC ACTIVITY</scope>
    <scope>MUTAGENESIS OF ASP-498</scope>
</reference>
<reference key="16">
    <citation type="journal article" date="2022" name="J. Med. Genet.">
        <title>Biallelic variants of ATP13A3 cause dose-dependent childhood-onset pulmonary arterial hypertension characterised by extreme morbidity and mortality.</title>
        <authorList>
            <consortium name="NIHR Bioresource - Rare Diseases"/>
            <person name="Machado R.D."/>
            <person name="Welch C.L."/>
            <person name="Haimel M."/>
            <person name="Bleda M."/>
            <person name="Colglazier E."/>
            <person name="Coulson J.D."/>
            <person name="Debeljak M."/>
            <person name="Ekstein J."/>
            <person name="Fineman J.R."/>
            <person name="Golden W.C."/>
            <person name="Griffin E.L."/>
            <person name="Hadinnapola C."/>
            <person name="Harris M.A."/>
            <person name="Hirsch Y."/>
            <person name="Hoover-Fong J.E."/>
            <person name="Nogee L."/>
            <person name="Romer L.H."/>
            <person name="Vesel S."/>
            <person name="Graef S."/>
            <person name="Morrell N.W."/>
            <person name="Southgate L."/>
            <person name="Chung W.K."/>
        </authorList>
    </citation>
    <scope>VARIANTS PPH5 CYS-743 AND MET-855</scope>
</reference>
<protein>
    <recommendedName>
        <fullName>Polyamine-transporting ATPase 13A3</fullName>
    </recommendedName>
    <alternativeName>
        <fullName>ATPase family homolog up-regulated in senescence cells 1</fullName>
    </alternativeName>
    <alternativeName>
        <fullName evidence="15">Putrescine transporting ATPase</fullName>
        <ecNumber evidence="9">7.6.2.16</ecNumber>
    </alternativeName>
</protein>
<accession>Q9H7F0</accession>
<accession>Q8NC11</accession>
<accession>Q96KS1</accession>
<proteinExistence type="evidence at protein level"/>
<name>AT133_HUMAN</name>
<feature type="chain" id="PRO_0000046425" description="Polyamine-transporting ATPase 13A3">
    <location>
        <begin position="1"/>
        <end position="1226"/>
    </location>
</feature>
<feature type="topological domain" description="Cytoplasmic" evidence="14">
    <location>
        <begin position="1"/>
        <end position="28"/>
    </location>
</feature>
<feature type="intramembrane region" evidence="14">
    <location>
        <begin position="29"/>
        <end position="49"/>
    </location>
</feature>
<feature type="topological domain" description="Cytoplasmic" evidence="14">
    <location>
        <begin position="50"/>
        <end position="205"/>
    </location>
</feature>
<feature type="transmembrane region" description="Helical" evidence="5">
    <location>
        <begin position="206"/>
        <end position="226"/>
    </location>
</feature>
<feature type="topological domain" description="Lumenal" evidence="14">
    <location>
        <begin position="227"/>
        <end position="232"/>
    </location>
</feature>
<feature type="transmembrane region" description="Helical" evidence="5">
    <location>
        <begin position="233"/>
        <end position="253"/>
    </location>
</feature>
<feature type="topological domain" description="Cytoplasmic" evidence="14">
    <location>
        <begin position="254"/>
        <end position="409"/>
    </location>
</feature>
<feature type="transmembrane region" description="Helical" evidence="5">
    <location>
        <begin position="410"/>
        <end position="430"/>
    </location>
</feature>
<feature type="topological domain" description="Lumenal" evidence="14">
    <location>
        <begin position="431"/>
        <end position="448"/>
    </location>
</feature>
<feature type="transmembrane region" description="Helical" evidence="5">
    <location>
        <begin position="449"/>
        <end position="469"/>
    </location>
</feature>
<feature type="topological domain" description="Cytoplasmic" evidence="14">
    <location>
        <begin position="470"/>
        <end position="940"/>
    </location>
</feature>
<feature type="transmembrane region" description="Helical" evidence="5">
    <location>
        <begin position="941"/>
        <end position="961"/>
    </location>
</feature>
<feature type="topological domain" description="Lumenal" evidence="14">
    <location>
        <position position="962"/>
    </location>
</feature>
<feature type="transmembrane region" description="Helical" evidence="5">
    <location>
        <begin position="963"/>
        <end position="983"/>
    </location>
</feature>
<feature type="topological domain" description="Cytoplasmic" evidence="14">
    <location>
        <begin position="984"/>
        <end position="999"/>
    </location>
</feature>
<feature type="transmembrane region" description="Helical" evidence="5">
    <location>
        <begin position="1000"/>
        <end position="1020"/>
    </location>
</feature>
<feature type="topological domain" description="Lumenal" evidence="14">
    <location>
        <begin position="1021"/>
        <end position="1073"/>
    </location>
</feature>
<feature type="transmembrane region" description="Helical" evidence="5">
    <location>
        <begin position="1074"/>
        <end position="1094"/>
    </location>
</feature>
<feature type="topological domain" description="Cytoplasmic" evidence="14">
    <location>
        <begin position="1095"/>
        <end position="1105"/>
    </location>
</feature>
<feature type="transmembrane region" description="Helical" evidence="5">
    <location>
        <begin position="1106"/>
        <end position="1126"/>
    </location>
</feature>
<feature type="topological domain" description="Lumenal" evidence="14">
    <location>
        <begin position="1127"/>
        <end position="1143"/>
    </location>
</feature>
<feature type="transmembrane region" description="Helical" evidence="5">
    <location>
        <begin position="1144"/>
        <end position="1164"/>
    </location>
</feature>
<feature type="topological domain" description="Cytoplasmic" evidence="14">
    <location>
        <begin position="1165"/>
        <end position="1226"/>
    </location>
</feature>
<feature type="active site" description="4-aspartylphosphate intermediate" evidence="3">
    <location>
        <position position="498"/>
    </location>
</feature>
<feature type="binding site" evidence="2">
    <location>
        <begin position="498"/>
        <end position="500"/>
    </location>
    <ligand>
        <name>ATP</name>
        <dbReference type="ChEBI" id="CHEBI:30616"/>
    </ligand>
</feature>
<feature type="binding site" evidence="2">
    <location>
        <position position="498"/>
    </location>
    <ligand>
        <name>Mg(2+)</name>
        <dbReference type="ChEBI" id="CHEBI:18420"/>
    </ligand>
</feature>
<feature type="binding site" evidence="2">
    <location>
        <position position="500"/>
    </location>
    <ligand>
        <name>Mg(2+)</name>
        <dbReference type="ChEBI" id="CHEBI:18420"/>
    </ligand>
</feature>
<feature type="binding site" evidence="4">
    <location>
        <position position="628"/>
    </location>
    <ligand>
        <name>ATP</name>
        <dbReference type="ChEBI" id="CHEBI:30616"/>
    </ligand>
</feature>
<feature type="binding site" evidence="2">
    <location>
        <position position="684"/>
    </location>
    <ligand>
        <name>ATP</name>
        <dbReference type="ChEBI" id="CHEBI:30616"/>
    </ligand>
</feature>
<feature type="binding site" evidence="2">
    <location>
        <position position="750"/>
    </location>
    <ligand>
        <name>ATP</name>
        <dbReference type="ChEBI" id="CHEBI:30616"/>
    </ligand>
</feature>
<feature type="binding site" evidence="2">
    <location>
        <begin position="883"/>
        <end position="887"/>
    </location>
    <ligand>
        <name>ATP</name>
        <dbReference type="ChEBI" id="CHEBI:30616"/>
    </ligand>
</feature>
<feature type="binding site" evidence="2">
    <location>
        <position position="883"/>
    </location>
    <ligand>
        <name>Mg(2+)</name>
        <dbReference type="ChEBI" id="CHEBI:18420"/>
    </ligand>
</feature>
<feature type="binding site" evidence="1">
    <location>
        <position position="887"/>
    </location>
    <ligand>
        <name>Mg(2+)</name>
        <dbReference type="ChEBI" id="CHEBI:18420"/>
    </ligand>
</feature>
<feature type="modified residue" description="Phosphoserine" evidence="18 20 23">
    <location>
        <position position="98"/>
    </location>
</feature>
<feature type="modified residue" description="Phosphoserine" evidence="17 18 19 20 21 22 23 24">
    <location>
        <position position="817"/>
    </location>
</feature>
<feature type="splice variant" id="VSP_007314" description="In isoform 2." evidence="11">
    <location>
        <begin position="1"/>
        <end position="277"/>
    </location>
</feature>
<feature type="splice variant" id="VSP_036300" description="In isoform 2." evidence="11">
    <original>NE</original>
    <variation>MS</variation>
    <location>
        <begin position="278"/>
        <end position="279"/>
    </location>
</feature>
<feature type="splice variant" id="VSP_007315" description="In isoform 2." evidence="11">
    <original>FCVFKFMALYSIIQYFSVTLLYSILSNLGDFQFLFIDLAIILV</original>
    <variation>SCELALFSIVTYSLDHFIISILISSMLVLFFSDFHNCAFYSLV</variation>
    <location>
        <begin position="936"/>
        <end position="978"/>
    </location>
</feature>
<feature type="splice variant" id="VSP_007316" description="In isoform 2." evidence="11">
    <location>
        <begin position="979"/>
        <end position="1226"/>
    </location>
</feature>
<feature type="sequence variant" id="VAR_087461" description="In PPH5." evidence="10">
    <original>R</original>
    <variation>C</variation>
    <location>
        <position position="743"/>
    </location>
</feature>
<feature type="sequence variant" id="VAR_087462" description="In PPH5; uncertain significance." evidence="8 10">
    <original>V</original>
    <variation>M</variation>
    <location>
        <position position="855"/>
    </location>
</feature>
<feature type="mutagenesis site" description="Impairs the transport activity." evidence="9">
    <original>D</original>
    <variation>N</variation>
    <location>
        <position position="498"/>
    </location>
</feature>
<feature type="sequence conflict" description="In Ref. 1; CAC84902." evidence="13" ref="1">
    <original>E</original>
    <variation>Q</variation>
    <location>
        <position position="347"/>
    </location>
</feature>
<feature type="sequence conflict" description="In Ref. 1; CAC84902." evidence="13" ref="1">
    <original>T</original>
    <variation>P</variation>
    <location>
        <position position="730"/>
    </location>
</feature>
<feature type="sequence conflict" description="In Ref. 3; BAC11398." evidence="13" ref="3">
    <original>V</original>
    <variation>F</variation>
    <location>
        <position position="784"/>
    </location>
</feature>
<feature type="sequence conflict" description="In Ref. 3; BAC11398." evidence="13" ref="3">
    <original>E</original>
    <variation>G</variation>
    <location>
        <position position="807"/>
    </location>
</feature>
<feature type="sequence conflict" description="In Ref. 3; BAC11398." evidence="13" ref="3">
    <original>G</original>
    <variation>R</variation>
    <location>
        <position position="964"/>
    </location>
</feature>
<sequence length="1226" mass="138043">MDREERKTINQGQEDEMEIYGYNLSRWKLAIVSLGVICSGGFLLLLLYWMPEWRVKATCVRAAIKDCEVVLLRTTDEFKMWFCAKIRVLSLETYPVSSPKSMSNKLSNGHAVCLIENPTEENRHRISKYSQTESQQIRYFTHHSVKYFWNDTIHNFDFLKGLDEGVSCTSIYEKHSAGLTKGMHAYRKLLYGVNEIAVKVPSVFKLLIKEVLNPFYIFQLFSVILWSTDEYYYYALAIVVMSIVSIVSSLYSIRKQYVMLHDMVATHSTVRVSVCRVNEEIEEIFSTDLVPGDVMVIPLNGTIMPCDAVLINGTCIVNESMLTGESVPVTKTNLPNPSVDVKGIGDELYNPETHKRHTLFCGTTVIQTRFYTGELVKAIVVRTGFSTSKGQLVRSILYPKPTDFKLYRDAYLFLLCLVAVAGIGFIYTIINSILNEVQVGVIIIESLDIITITVPPALPAAMTAGIVYAQRRLKKIGIFCISPQRINICGQLNLVCFDKTGTLTEDGLDLWGIQRVENARFLSPEENVCNEMLVKSQFVACMATCHSLTKIEGVLSGDPLDLKMFEAIGWILEEATEEETALHNRIMPTVVRPPKQLLPESTPAGNQEMELFELPATYEIGIVRQFPFSSALQRMSVVARVLGDRKMDAYMKGAPEAIAGLCKPETVPVDFQNVLEDFTKQGFRVIALAHRKLESKLTWHKVQNISRDAIENNMDFMGLIIMQNKLKQETPAVLEDLHKANIRTVMVTGDSMLTAVSVARDCGMILPQDKVIIAEALPPKDGKVAKINWHYADSLTQCSHPSAIDPEAIPVKLVHDSLEDLQMTRYHFAMNGKSFSVILEHFQDLVPKLMLHGTVFARMAPDQKTQLIEALQNVDYFVGMCGDGANDCGALKRAHGGISLSELEASVASPFTSKTPSISCVPNLIREGRAALITSFCVFKFMALYSIIQYFSVTLLYSILSNLGDFQFLFIDLAIILVVVFTMSLNPAWKELVAQRPPSGLISGALLFSVLSQIIICIGFQSLGFFWVKQQPWYEVWHPKSDACNTTGSGFWNSSHVDNETELDEHNIQNYENTTVFFISSFQYLIVAIAFSKGKPFRQPCYKNYFFVFSVIFLYIFILFIMLYPVASVDQVLQIVCVPYQWRVTMLIIVLVNAFVSITVEESVDRWGKCCLPWALGCRKKTPKAKYMYLAQELLVDPEWPPKPQTTTEAKALVKENGSCQIITIT</sequence>
<organism>
    <name type="scientific">Homo sapiens</name>
    <name type="common">Human</name>
    <dbReference type="NCBI Taxonomy" id="9606"/>
    <lineage>
        <taxon>Eukaryota</taxon>
        <taxon>Metazoa</taxon>
        <taxon>Chordata</taxon>
        <taxon>Craniata</taxon>
        <taxon>Vertebrata</taxon>
        <taxon>Euteleostomi</taxon>
        <taxon>Mammalia</taxon>
        <taxon>Eutheria</taxon>
        <taxon>Euarchontoglires</taxon>
        <taxon>Primates</taxon>
        <taxon>Haplorrhini</taxon>
        <taxon>Catarrhini</taxon>
        <taxon>Hominidae</taxon>
        <taxon>Homo</taxon>
    </lineage>
</organism>
<dbReference type="EC" id="7.6.2.16" evidence="9"/>
<dbReference type="EMBL" id="AJ306929">
    <property type="protein sequence ID" value="CAC84902.1"/>
    <property type="molecule type" value="mRNA"/>
</dbReference>
<dbReference type="EMBL" id="AC108676">
    <property type="status" value="NOT_ANNOTATED_CDS"/>
    <property type="molecule type" value="Genomic_DNA"/>
</dbReference>
<dbReference type="EMBL" id="AC125362">
    <property type="status" value="NOT_ANNOTATED_CDS"/>
    <property type="molecule type" value="Genomic_DNA"/>
</dbReference>
<dbReference type="EMBL" id="AK024639">
    <property type="protein sequence ID" value="BAB14942.1"/>
    <property type="status" value="ALT_SEQ"/>
    <property type="molecule type" value="mRNA"/>
</dbReference>
<dbReference type="EMBL" id="AK075094">
    <property type="protein sequence ID" value="BAC11398.1"/>
    <property type="status" value="ALT_INIT"/>
    <property type="molecule type" value="mRNA"/>
</dbReference>
<dbReference type="CCDS" id="CCDS43187.1">
    <molecule id="Q9H7F0-1"/>
</dbReference>
<dbReference type="RefSeq" id="NP_078800.3">
    <molecule id="Q9H7F0-1"/>
    <property type="nucleotide sequence ID" value="NM_024524.3"/>
</dbReference>
<dbReference type="RefSeq" id="XP_011511425.1">
    <molecule id="Q9H7F0-1"/>
    <property type="nucleotide sequence ID" value="XM_011513123.3"/>
</dbReference>
<dbReference type="RefSeq" id="XP_047304868.1">
    <molecule id="Q9H7F0-1"/>
    <property type="nucleotide sequence ID" value="XM_047448912.1"/>
</dbReference>
<dbReference type="RefSeq" id="XP_047304869.1">
    <molecule id="Q9H7F0-1"/>
    <property type="nucleotide sequence ID" value="XM_047448913.1"/>
</dbReference>
<dbReference type="RefSeq" id="XP_047304870.1">
    <molecule id="Q9H7F0-1"/>
    <property type="nucleotide sequence ID" value="XM_047448914.1"/>
</dbReference>
<dbReference type="RefSeq" id="XP_047304871.1">
    <molecule id="Q9H7F0-1"/>
    <property type="nucleotide sequence ID" value="XM_047448915.1"/>
</dbReference>
<dbReference type="RefSeq" id="XP_054203826.1">
    <molecule id="Q9H7F0-1"/>
    <property type="nucleotide sequence ID" value="XM_054347851.1"/>
</dbReference>
<dbReference type="RefSeq" id="XP_054203827.1">
    <molecule id="Q9H7F0-1"/>
    <property type="nucleotide sequence ID" value="XM_054347852.1"/>
</dbReference>
<dbReference type="RefSeq" id="XP_054203828.1">
    <molecule id="Q9H7F0-1"/>
    <property type="nucleotide sequence ID" value="XM_054347853.1"/>
</dbReference>
<dbReference type="RefSeq" id="XP_054203829.1">
    <molecule id="Q9H7F0-1"/>
    <property type="nucleotide sequence ID" value="XM_054347854.1"/>
</dbReference>
<dbReference type="RefSeq" id="XP_054203830.1">
    <molecule id="Q9H7F0-1"/>
    <property type="nucleotide sequence ID" value="XM_054347855.1"/>
</dbReference>
<dbReference type="SMR" id="Q9H7F0"/>
<dbReference type="BioGRID" id="122719">
    <property type="interactions" value="183"/>
</dbReference>
<dbReference type="FunCoup" id="Q9H7F0">
    <property type="interactions" value="897"/>
</dbReference>
<dbReference type="IntAct" id="Q9H7F0">
    <property type="interactions" value="114"/>
</dbReference>
<dbReference type="MINT" id="Q9H7F0"/>
<dbReference type="STRING" id="9606.ENSP00000416508"/>
<dbReference type="GlyGen" id="Q9H7F0">
    <property type="glycosylation" value="1 site, 1 O-linked glycan (1 site)"/>
</dbReference>
<dbReference type="iPTMnet" id="Q9H7F0"/>
<dbReference type="PhosphoSitePlus" id="Q9H7F0"/>
<dbReference type="SwissPalm" id="Q9H7F0"/>
<dbReference type="BioMuta" id="ATP13A3"/>
<dbReference type="DMDM" id="223590262"/>
<dbReference type="jPOST" id="Q9H7F0"/>
<dbReference type="MassIVE" id="Q9H7F0"/>
<dbReference type="PaxDb" id="9606-ENSP00000416508"/>
<dbReference type="PeptideAtlas" id="Q9H7F0"/>
<dbReference type="ProteomicsDB" id="81118">
    <molecule id="Q9H7F0-1"/>
</dbReference>
<dbReference type="ProteomicsDB" id="81119">
    <molecule id="Q9H7F0-2"/>
</dbReference>
<dbReference type="Pumba" id="Q9H7F0"/>
<dbReference type="Antibodypedia" id="33892">
    <property type="antibodies" value="64 antibodies from 13 providers"/>
</dbReference>
<dbReference type="DNASU" id="79572"/>
<dbReference type="Ensembl" id="ENST00000439040.6">
    <molecule id="Q9H7F0-1"/>
    <property type="protein sequence ID" value="ENSP00000416508.1"/>
    <property type="gene ID" value="ENSG00000133657.17"/>
</dbReference>
<dbReference type="Ensembl" id="ENST00000645538.1">
    <molecule id="Q9H7F0-1"/>
    <property type="protein sequence ID" value="ENSP00000494471.1"/>
    <property type="gene ID" value="ENSG00000133657.17"/>
</dbReference>
<dbReference type="GeneID" id="79572"/>
<dbReference type="KEGG" id="hsa:79572"/>
<dbReference type="UCSC" id="uc003fty.5">
    <molecule id="Q9H7F0-1"/>
    <property type="organism name" value="human"/>
</dbReference>
<dbReference type="AGR" id="HGNC:24113"/>
<dbReference type="CTD" id="79572"/>
<dbReference type="DisGeNET" id="79572"/>
<dbReference type="GeneCards" id="ATP13A3"/>
<dbReference type="HGNC" id="HGNC:24113">
    <property type="gene designation" value="ATP13A3"/>
</dbReference>
<dbReference type="HPA" id="ENSG00000133657">
    <property type="expression patterns" value="Low tissue specificity"/>
</dbReference>
<dbReference type="MalaCards" id="ATP13A3"/>
<dbReference type="MIM" id="265400">
    <property type="type" value="phenotype"/>
</dbReference>
<dbReference type="MIM" id="610232">
    <property type="type" value="gene"/>
</dbReference>
<dbReference type="neXtProt" id="NX_Q9H7F0"/>
<dbReference type="OpenTargets" id="ENSG00000133657"/>
<dbReference type="Orphanet" id="275777">
    <property type="disease" value="Heritable pulmonary arterial hypertension"/>
</dbReference>
<dbReference type="PharmGKB" id="PA134971145"/>
<dbReference type="VEuPathDB" id="HostDB:ENSG00000133657"/>
<dbReference type="eggNOG" id="KOG0208">
    <property type="taxonomic scope" value="Eukaryota"/>
</dbReference>
<dbReference type="GeneTree" id="ENSGT00940000155941"/>
<dbReference type="HOGENOM" id="CLU_001828_0_0_1"/>
<dbReference type="InParanoid" id="Q9H7F0"/>
<dbReference type="OrthoDB" id="48943at2759"/>
<dbReference type="PAN-GO" id="Q9H7F0">
    <property type="GO annotations" value="5 GO annotations based on evolutionary models"/>
</dbReference>
<dbReference type="PhylomeDB" id="Q9H7F0"/>
<dbReference type="TreeFam" id="TF300331"/>
<dbReference type="PathwayCommons" id="Q9H7F0"/>
<dbReference type="SignaLink" id="Q9H7F0"/>
<dbReference type="BioGRID-ORCS" id="79572">
    <property type="hits" value="6 hits in 1165 CRISPR screens"/>
</dbReference>
<dbReference type="ChiTaRS" id="ATP13A3">
    <property type="organism name" value="human"/>
</dbReference>
<dbReference type="GeneWiki" id="ATP13A3"/>
<dbReference type="GenomeRNAi" id="79572"/>
<dbReference type="Pharos" id="Q9H7F0">
    <property type="development level" value="Tbio"/>
</dbReference>
<dbReference type="PRO" id="PR:Q9H7F0"/>
<dbReference type="Proteomes" id="UP000005640">
    <property type="component" value="Chromosome 3"/>
</dbReference>
<dbReference type="RNAct" id="Q9H7F0">
    <property type="molecule type" value="protein"/>
</dbReference>
<dbReference type="Bgee" id="ENSG00000133657">
    <property type="expression patterns" value="Expressed in decidua and 207 other cell types or tissues"/>
</dbReference>
<dbReference type="ExpressionAtlas" id="Q9H7F0">
    <property type="expression patterns" value="baseline and differential"/>
</dbReference>
<dbReference type="GO" id="GO:0031901">
    <property type="term" value="C:early endosome membrane"/>
    <property type="evidence" value="ECO:0000314"/>
    <property type="project" value="UniProtKB"/>
</dbReference>
<dbReference type="GO" id="GO:0031902">
    <property type="term" value="C:late endosome membrane"/>
    <property type="evidence" value="ECO:0000314"/>
    <property type="project" value="UniProtKB"/>
</dbReference>
<dbReference type="GO" id="GO:0016020">
    <property type="term" value="C:membrane"/>
    <property type="evidence" value="ECO:0007005"/>
    <property type="project" value="UniProtKB"/>
</dbReference>
<dbReference type="GO" id="GO:0055038">
    <property type="term" value="C:recycling endosome membrane"/>
    <property type="evidence" value="ECO:0000314"/>
    <property type="project" value="UniProtKB"/>
</dbReference>
<dbReference type="GO" id="GO:0015594">
    <property type="term" value="F:ABC-type putrescine transporter activity"/>
    <property type="evidence" value="ECO:0007669"/>
    <property type="project" value="UniProtKB-EC"/>
</dbReference>
<dbReference type="GO" id="GO:0005524">
    <property type="term" value="F:ATP binding"/>
    <property type="evidence" value="ECO:0007669"/>
    <property type="project" value="UniProtKB-KW"/>
</dbReference>
<dbReference type="GO" id="GO:0016887">
    <property type="term" value="F:ATP hydrolysis activity"/>
    <property type="evidence" value="ECO:0007669"/>
    <property type="project" value="InterPro"/>
</dbReference>
<dbReference type="GO" id="GO:0019829">
    <property type="term" value="F:ATPase-coupled monoatomic cation transmembrane transporter activity"/>
    <property type="evidence" value="ECO:0000318"/>
    <property type="project" value="GO_Central"/>
</dbReference>
<dbReference type="GO" id="GO:0046872">
    <property type="term" value="F:metal ion binding"/>
    <property type="evidence" value="ECO:0007669"/>
    <property type="project" value="UniProtKB-KW"/>
</dbReference>
<dbReference type="GO" id="GO:0015662">
    <property type="term" value="F:P-type ion transporter activity"/>
    <property type="evidence" value="ECO:0007669"/>
    <property type="project" value="InterPro"/>
</dbReference>
<dbReference type="GO" id="GO:0140358">
    <property type="term" value="F:P-type transmembrane transporter activity"/>
    <property type="evidence" value="ECO:0000314"/>
    <property type="project" value="UniProtKB"/>
</dbReference>
<dbReference type="GO" id="GO:0015203">
    <property type="term" value="F:polyamine transmembrane transporter activity"/>
    <property type="evidence" value="ECO:0000318"/>
    <property type="project" value="GO_Central"/>
</dbReference>
<dbReference type="GO" id="GO:0006874">
    <property type="term" value="P:intracellular calcium ion homeostasis"/>
    <property type="evidence" value="ECO:0000318"/>
    <property type="project" value="GO_Central"/>
</dbReference>
<dbReference type="GO" id="GO:1902047">
    <property type="term" value="P:polyamine transmembrane transport"/>
    <property type="evidence" value="ECO:0000318"/>
    <property type="project" value="GO_Central"/>
</dbReference>
<dbReference type="CDD" id="cd07542">
    <property type="entry name" value="P-type_ATPase_cation"/>
    <property type="match status" value="1"/>
</dbReference>
<dbReference type="FunFam" id="1.20.1110.10:FF:000023">
    <property type="entry name" value="Cation-transporting ATPase"/>
    <property type="match status" value="1"/>
</dbReference>
<dbReference type="FunFam" id="1.20.1110.10:FF:000026">
    <property type="entry name" value="Cation-transporting ATPase"/>
    <property type="match status" value="1"/>
</dbReference>
<dbReference type="FunFam" id="2.70.150.10:FF:000017">
    <property type="entry name" value="Cation-transporting ATPase"/>
    <property type="match status" value="1"/>
</dbReference>
<dbReference type="FunFam" id="3.40.1110.10:FF:000026">
    <property type="entry name" value="Cation-transporting ATPase"/>
    <property type="match status" value="1"/>
</dbReference>
<dbReference type="FunFam" id="3.40.50.1000:FF:000045">
    <property type="entry name" value="Cation-transporting ATPase"/>
    <property type="match status" value="1"/>
</dbReference>
<dbReference type="Gene3D" id="3.40.1110.10">
    <property type="entry name" value="Calcium-transporting ATPase, cytoplasmic domain N"/>
    <property type="match status" value="1"/>
</dbReference>
<dbReference type="Gene3D" id="2.70.150.10">
    <property type="entry name" value="Calcium-transporting ATPase, cytoplasmic transduction domain A"/>
    <property type="match status" value="1"/>
</dbReference>
<dbReference type="Gene3D" id="1.20.1110.10">
    <property type="entry name" value="Calcium-transporting ATPase, transmembrane domain"/>
    <property type="match status" value="1"/>
</dbReference>
<dbReference type="Gene3D" id="3.40.50.1000">
    <property type="entry name" value="HAD superfamily/HAD-like"/>
    <property type="match status" value="1"/>
</dbReference>
<dbReference type="InterPro" id="IPR004014">
    <property type="entry name" value="ATPase_P-typ_cation-transptr_N"/>
</dbReference>
<dbReference type="InterPro" id="IPR023299">
    <property type="entry name" value="ATPase_P-typ_cyto_dom_N"/>
</dbReference>
<dbReference type="InterPro" id="IPR018303">
    <property type="entry name" value="ATPase_P-typ_P_site"/>
</dbReference>
<dbReference type="InterPro" id="IPR023298">
    <property type="entry name" value="ATPase_P-typ_TM_dom_sf"/>
</dbReference>
<dbReference type="InterPro" id="IPR008250">
    <property type="entry name" value="ATPase_P-typ_transduc_dom_A_sf"/>
</dbReference>
<dbReference type="InterPro" id="IPR036412">
    <property type="entry name" value="HAD-like_sf"/>
</dbReference>
<dbReference type="InterPro" id="IPR023214">
    <property type="entry name" value="HAD_sf"/>
</dbReference>
<dbReference type="InterPro" id="IPR006544">
    <property type="entry name" value="P-type_TPase_V"/>
</dbReference>
<dbReference type="InterPro" id="IPR047819">
    <property type="entry name" value="P5A-ATPase_N"/>
</dbReference>
<dbReference type="InterPro" id="IPR047821">
    <property type="entry name" value="P5B-type_ATPase"/>
</dbReference>
<dbReference type="InterPro" id="IPR001757">
    <property type="entry name" value="P_typ_ATPase"/>
</dbReference>
<dbReference type="InterPro" id="IPR044492">
    <property type="entry name" value="P_typ_ATPase_HD_dom"/>
</dbReference>
<dbReference type="NCBIfam" id="TIGR01494">
    <property type="entry name" value="ATPase_P-type"/>
    <property type="match status" value="3"/>
</dbReference>
<dbReference type="NCBIfam" id="TIGR01657">
    <property type="entry name" value="P-ATPase-V"/>
    <property type="match status" value="1"/>
</dbReference>
<dbReference type="PANTHER" id="PTHR45630">
    <property type="entry name" value="CATION-TRANSPORTING ATPASE-RELATED"/>
    <property type="match status" value="1"/>
</dbReference>
<dbReference type="PANTHER" id="PTHR45630:SF12">
    <property type="entry name" value="POLYAMINE-TRANSPORTING ATPASE 13A3"/>
    <property type="match status" value="1"/>
</dbReference>
<dbReference type="Pfam" id="PF13246">
    <property type="entry name" value="Cation_ATPase"/>
    <property type="match status" value="1"/>
</dbReference>
<dbReference type="Pfam" id="PF00690">
    <property type="entry name" value="Cation_ATPase_N"/>
    <property type="match status" value="1"/>
</dbReference>
<dbReference type="Pfam" id="PF00122">
    <property type="entry name" value="E1-E2_ATPase"/>
    <property type="match status" value="1"/>
</dbReference>
<dbReference type="Pfam" id="PF12409">
    <property type="entry name" value="P5-ATPase"/>
    <property type="match status" value="1"/>
</dbReference>
<dbReference type="PRINTS" id="PR00119">
    <property type="entry name" value="CATATPASE"/>
</dbReference>
<dbReference type="SFLD" id="SFLDG00002">
    <property type="entry name" value="C1.7:_P-type_atpase_like"/>
    <property type="match status" value="1"/>
</dbReference>
<dbReference type="SFLD" id="SFLDF00027">
    <property type="entry name" value="p-type_atpase"/>
    <property type="match status" value="1"/>
</dbReference>
<dbReference type="SUPFAM" id="SSF81653">
    <property type="entry name" value="Calcium ATPase, transduction domain A"/>
    <property type="match status" value="1"/>
</dbReference>
<dbReference type="SUPFAM" id="SSF81665">
    <property type="entry name" value="Calcium ATPase, transmembrane domain M"/>
    <property type="match status" value="1"/>
</dbReference>
<dbReference type="SUPFAM" id="SSF56784">
    <property type="entry name" value="HAD-like"/>
    <property type="match status" value="1"/>
</dbReference>
<dbReference type="SUPFAM" id="SSF81660">
    <property type="entry name" value="Metal cation-transporting ATPase, ATP-binding domain N"/>
    <property type="match status" value="1"/>
</dbReference>
<dbReference type="PROSITE" id="PS00154">
    <property type="entry name" value="ATPASE_E1_E2"/>
    <property type="match status" value="1"/>
</dbReference>
<evidence type="ECO:0000250" key="1"/>
<evidence type="ECO:0000250" key="2">
    <source>
        <dbReference type="UniProtKB" id="P39986"/>
    </source>
</evidence>
<evidence type="ECO:0000250" key="3">
    <source>
        <dbReference type="UniProtKB" id="Q9NQ11"/>
    </source>
</evidence>
<evidence type="ECO:0000250" key="4">
    <source>
        <dbReference type="UniProtKB" id="Q9Y2Q0"/>
    </source>
</evidence>
<evidence type="ECO:0000255" key="5"/>
<evidence type="ECO:0000269" key="6">
    <source>
    </source>
</evidence>
<evidence type="ECO:0000269" key="7">
    <source>
    </source>
</evidence>
<evidence type="ECO:0000269" key="8">
    <source>
    </source>
</evidence>
<evidence type="ECO:0000269" key="9">
    <source>
    </source>
</evidence>
<evidence type="ECO:0000269" key="10">
    <source>
    </source>
</evidence>
<evidence type="ECO:0000303" key="11">
    <source>
    </source>
</evidence>
<evidence type="ECO:0000303" key="12">
    <source>
    </source>
</evidence>
<evidence type="ECO:0000305" key="13"/>
<evidence type="ECO:0000305" key="14">
    <source>
    </source>
</evidence>
<evidence type="ECO:0000305" key="15">
    <source>
    </source>
</evidence>
<evidence type="ECO:0000312" key="16">
    <source>
        <dbReference type="HGNC" id="HGNC:24113"/>
    </source>
</evidence>
<evidence type="ECO:0007744" key="17">
    <source>
    </source>
</evidence>
<evidence type="ECO:0007744" key="18">
    <source>
    </source>
</evidence>
<evidence type="ECO:0007744" key="19">
    <source>
    </source>
</evidence>
<evidence type="ECO:0007744" key="20">
    <source>
    </source>
</evidence>
<evidence type="ECO:0007744" key="21">
    <source>
    </source>
</evidence>
<evidence type="ECO:0007744" key="22">
    <source>
    </source>
</evidence>
<evidence type="ECO:0007744" key="23">
    <source>
    </source>
</evidence>
<evidence type="ECO:0007744" key="24">
    <source>
    </source>
</evidence>
<gene>
    <name evidence="12 16" type="primary">ATP13A3</name>
    <name evidence="11" type="synonym">AFURS1</name>
</gene>
<comment type="function">
    <text evidence="6 9">ATP-driven pump involved in endocytosis-dependent polyamine transport. Uses ATP as an energy source to transfer polyamine precursor putrescine from the endosomal compartment to the cytosol.</text>
</comment>
<comment type="catalytic activity">
    <reaction evidence="9">
        <text>putrescine(out) + ATP + H2O = putrescine(in) + ADP + phosphate + H(+)</text>
        <dbReference type="Rhea" id="RHEA:29995"/>
        <dbReference type="ChEBI" id="CHEBI:15377"/>
        <dbReference type="ChEBI" id="CHEBI:15378"/>
        <dbReference type="ChEBI" id="CHEBI:30616"/>
        <dbReference type="ChEBI" id="CHEBI:43474"/>
        <dbReference type="ChEBI" id="CHEBI:326268"/>
        <dbReference type="ChEBI" id="CHEBI:456216"/>
        <dbReference type="EC" id="7.6.2.16"/>
    </reaction>
    <physiologicalReaction direction="left-to-right" evidence="15">
        <dbReference type="Rhea" id="RHEA:29996"/>
    </physiologicalReaction>
</comment>
<comment type="subcellular location">
    <subcellularLocation>
        <location evidence="7">Recycling endosome membrane</location>
        <topology evidence="5">Multi-pass membrane protein</topology>
    </subcellularLocation>
    <subcellularLocation>
        <location evidence="7">Early endosome membrane</location>
        <topology evidence="5">Multi-pass membrane protein</topology>
    </subcellularLocation>
    <subcellularLocation>
        <location evidence="7">Late endosome membrane</location>
        <topology evidence="5">Multi-pass membrane protein</topology>
    </subcellularLocation>
    <text evidence="7">Mainly targeted to the recycling endosomes and to a lesser extent to the early and late endosomes.</text>
</comment>
<comment type="alternative products">
    <event type="alternative splicing"/>
    <isoform>
        <id>Q9H7F0-1</id>
        <name>1</name>
        <sequence type="displayed"/>
    </isoform>
    <isoform>
        <id>Q9H7F0-2</id>
        <name>2</name>
        <sequence type="described" ref="VSP_007314 VSP_036300 VSP_007315 VSP_007316"/>
    </isoform>
</comment>
<comment type="tissue specificity">
    <text evidence="7">Broadly expressed.</text>
</comment>
<comment type="induction">
    <text evidence="6">Up-regulated by polyamine biosynthesis inhibitor, difluoromethylornithine (DFMO).</text>
</comment>
<comment type="disease" evidence="8 10">
    <disease id="DI-06437">
        <name>Pulmonary hypertension, primary, 5</name>
        <acronym>PPH5</acronym>
        <description>A form of primary pulmonary hypertension, a disease defined by plexiform lesions of proliferating endothelial cells in pulmonary arterioles. The lesions lead to elevated pulmonary arterial pression, right ventricular failure, and death. Primary pulmonary hypertension exhibits incomplete penetrance, sex bias and variable age of onset, both within and between families. PPH5 is an autosomal recessive form characterized by the onset in infancy. Death in early childhood is common.</description>
        <dbReference type="MIM" id="265400"/>
    </disease>
    <text>The disease is caused by variants affecting the gene represented in this entry.</text>
</comment>
<comment type="miscellaneous">
    <molecule>Isoform 2</molecule>
    <text evidence="13">Dubious isoform produced through aberrant splice sites.</text>
</comment>
<comment type="similarity">
    <text evidence="13">Belongs to the cation transport ATPase (P-type) (TC 3.A.3) family. Type V subfamily.</text>
</comment>
<comment type="sequence caution" evidence="13">
    <conflict type="erroneous initiation">
        <sequence resource="EMBL-CDS" id="BAB14942"/>
    </conflict>
    <text>Truncated N-terminus.</text>
</comment>
<comment type="sequence caution" evidence="13">
    <conflict type="frameshift">
        <sequence resource="EMBL-CDS" id="BAB14942"/>
    </conflict>
</comment>
<comment type="sequence caution" evidence="13">
    <conflict type="erroneous initiation">
        <sequence resource="EMBL-CDS" id="BAC11398"/>
    </conflict>
    <text>Truncated N-terminus.</text>
</comment>
<keyword id="KW-0025">Alternative splicing</keyword>
<keyword id="KW-0067">ATP-binding</keyword>
<keyword id="KW-0967">Endosome</keyword>
<keyword id="KW-0460">Magnesium</keyword>
<keyword id="KW-0472">Membrane</keyword>
<keyword id="KW-0479">Metal-binding</keyword>
<keyword id="KW-0547">Nucleotide-binding</keyword>
<keyword id="KW-0597">Phosphoprotein</keyword>
<keyword id="KW-1267">Proteomics identification</keyword>
<keyword id="KW-1185">Reference proteome</keyword>
<keyword id="KW-1278">Translocase</keyword>
<keyword id="KW-0812">Transmembrane</keyword>
<keyword id="KW-1133">Transmembrane helix</keyword>